<geneLocation type="chloroplast"/>
<proteinExistence type="inferred from homology"/>
<protein>
    <recommendedName>
        <fullName evidence="3">DNA-directed RNA polymerase subunit beta'-beta''</fullName>
        <ecNumber evidence="1">2.7.7.6</ecNumber>
    </recommendedName>
    <alternativeName>
        <fullName evidence="1">PEP</fullName>
    </alternativeName>
    <domain>
        <recommendedName>
            <fullName>DNA-directed RNA polymerase subunit beta'</fullName>
        </recommendedName>
        <alternativeName>
            <fullName>Plastid-encoded RNA polymerase subunit beta'</fullName>
            <shortName>RNA polymerase beta'</shortName>
        </alternativeName>
    </domain>
    <domain>
        <recommendedName>
            <fullName>DNA-directed RNA polymerase subunit beta''</fullName>
        </recommendedName>
        <alternativeName>
            <fullName>Plastid-encoded RNA polymerase subunit beta''</fullName>
            <shortName>RNA polymerase subunit beta''</shortName>
        </alternativeName>
    </domain>
</protein>
<keyword id="KW-0150">Chloroplast</keyword>
<keyword id="KW-0240">DNA-directed RNA polymerase</keyword>
<keyword id="KW-0460">Magnesium</keyword>
<keyword id="KW-0479">Metal-binding</keyword>
<keyword id="KW-0548">Nucleotidyltransferase</keyword>
<keyword id="KW-0934">Plastid</keyword>
<keyword id="KW-1185">Reference proteome</keyword>
<keyword id="KW-0804">Transcription</keyword>
<keyword id="KW-0808">Transferase</keyword>
<keyword id="KW-0862">Zinc</keyword>
<gene>
    <name evidence="3" type="primary">rpoC</name>
</gene>
<organism>
    <name type="scientific">Cyanidioschyzon merolae (strain NIES-3377 / 10D)</name>
    <name type="common">Unicellular red alga</name>
    <dbReference type="NCBI Taxonomy" id="280699"/>
    <lineage>
        <taxon>Eukaryota</taxon>
        <taxon>Rhodophyta</taxon>
        <taxon>Bangiophyceae</taxon>
        <taxon>Cyanidiales</taxon>
        <taxon>Cyanidiaceae</taxon>
        <taxon>Cyanidioschyzon</taxon>
    </lineage>
</organism>
<evidence type="ECO:0000255" key="1">
    <source>
        <dbReference type="HAMAP-Rule" id="MF_01322"/>
    </source>
</evidence>
<evidence type="ECO:0000303" key="2">
    <source>
    </source>
</evidence>
<evidence type="ECO:0000305" key="3"/>
<name>RPOC_CYAM1</name>
<comment type="function">
    <text evidence="1">DNA-dependent RNA polymerase catalyzes the transcription of DNA into RNA using the four ribonucleoside triphosphates as substrates.</text>
</comment>
<comment type="catalytic activity">
    <reaction evidence="1">
        <text>RNA(n) + a ribonucleoside 5'-triphosphate = RNA(n+1) + diphosphate</text>
        <dbReference type="Rhea" id="RHEA:21248"/>
        <dbReference type="Rhea" id="RHEA-COMP:14527"/>
        <dbReference type="Rhea" id="RHEA-COMP:17342"/>
        <dbReference type="ChEBI" id="CHEBI:33019"/>
        <dbReference type="ChEBI" id="CHEBI:61557"/>
        <dbReference type="ChEBI" id="CHEBI:140395"/>
        <dbReference type="EC" id="2.7.7.6"/>
    </reaction>
</comment>
<comment type="cofactor">
    <cofactor evidence="1">
        <name>Mg(2+)</name>
        <dbReference type="ChEBI" id="CHEBI:18420"/>
    </cofactor>
    <text evidence="1">Binds 1 Mg(2+) ion per subunit.</text>
</comment>
<comment type="cofactor">
    <cofactor evidence="1">
        <name>Zn(2+)</name>
        <dbReference type="ChEBI" id="CHEBI:29105"/>
    </cofactor>
    <text evidence="1">Binds 2 Zn(2+) ions per subunit.</text>
</comment>
<comment type="subunit">
    <text evidence="1 3">In plastids the minimal PEP RNA polymerase catalytic core is composed of four subunits: alpha, beta, beta', and beta''. When a (nuclear-encoded) sigma factor is associated with the core the holoenzyme is formed, which can initiate transcription. Beta' and beta'' are fused in this algae.</text>
</comment>
<comment type="subcellular location">
    <subcellularLocation>
        <location evidence="1">Plastid</location>
        <location evidence="1">Chloroplast</location>
    </subcellularLocation>
</comment>
<comment type="miscellaneous">
    <text evidence="2">In this algae the rpoC1 (beta') and rpoC2 (beta'') genes are fused into one ORF. This seems to be the result of evolution acting to reduce protein size rather than horizontal transfer from a bacteria. Thus this is considered an atypical member of the bacterial RpoC family.</text>
</comment>
<comment type="similarity">
    <text evidence="3">In the N-terminal section; belongs to the RNA polymerase beta' chain family. RpoC1 subfamily.</text>
</comment>
<comment type="similarity">
    <text evidence="3">In the C-terminal section; belongs to the RNA polymerase beta' chain family. RpoC2 subfamily.</text>
</comment>
<feature type="chain" id="PRO_0000067870" description="DNA-directed RNA polymerase subunit beta'-beta''">
    <location>
        <begin position="1"/>
        <end position="1676"/>
    </location>
</feature>
<feature type="region of interest" description="DNA-directed RNA polymerase subunit beta'">
    <location>
        <begin position="1"/>
        <end position="582"/>
    </location>
</feature>
<feature type="region of interest" description="DNA-directed RNA polymerase subunit beta''">
    <location>
        <begin position="583"/>
        <end position="1676"/>
    </location>
</feature>
<feature type="binding site" evidence="1">
    <location>
        <position position="64"/>
    </location>
    <ligand>
        <name>Zn(2+)</name>
        <dbReference type="ChEBI" id="CHEBI:29105"/>
        <label>1</label>
    </ligand>
</feature>
<feature type="binding site" evidence="1">
    <location>
        <position position="66"/>
    </location>
    <ligand>
        <name>Zn(2+)</name>
        <dbReference type="ChEBI" id="CHEBI:29105"/>
        <label>1</label>
    </ligand>
</feature>
<feature type="binding site" evidence="1">
    <location>
        <position position="79"/>
    </location>
    <ligand>
        <name>Zn(2+)</name>
        <dbReference type="ChEBI" id="CHEBI:29105"/>
        <label>1</label>
    </ligand>
</feature>
<feature type="binding site" evidence="1">
    <location>
        <position position="82"/>
    </location>
    <ligand>
        <name>Zn(2+)</name>
        <dbReference type="ChEBI" id="CHEBI:29105"/>
        <label>1</label>
    </ligand>
</feature>
<feature type="binding site" evidence="1">
    <location>
        <position position="454"/>
    </location>
    <ligand>
        <name>Mg(2+)</name>
        <dbReference type="ChEBI" id="CHEBI:18420"/>
    </ligand>
</feature>
<feature type="binding site" evidence="1">
    <location>
        <position position="456"/>
    </location>
    <ligand>
        <name>Mg(2+)</name>
        <dbReference type="ChEBI" id="CHEBI:18420"/>
    </ligand>
</feature>
<feature type="binding site" evidence="1">
    <location>
        <position position="458"/>
    </location>
    <ligand>
        <name>Mg(2+)</name>
        <dbReference type="ChEBI" id="CHEBI:18420"/>
    </ligand>
</feature>
<feature type="binding site" evidence="1">
    <location>
        <position position="804"/>
    </location>
    <ligand>
        <name>Zn(2+)</name>
        <dbReference type="ChEBI" id="CHEBI:29105"/>
        <label>2</label>
    </ligand>
</feature>
<feature type="binding site" evidence="1">
    <location>
        <position position="859"/>
    </location>
    <ligand>
        <name>Zn(2+)</name>
        <dbReference type="ChEBI" id="CHEBI:29105"/>
        <label>2</label>
    </ligand>
</feature>
<feature type="binding site" evidence="1">
    <location>
        <position position="866"/>
    </location>
    <ligand>
        <name>Zn(2+)</name>
        <dbReference type="ChEBI" id="CHEBI:29105"/>
        <label>2</label>
    </ligand>
</feature>
<feature type="binding site" evidence="1">
    <location>
        <position position="869"/>
    </location>
    <ligand>
        <name>Zn(2+)</name>
        <dbReference type="ChEBI" id="CHEBI:29105"/>
        <label>2</label>
    </ligand>
</feature>
<reference key="1">
    <citation type="journal article" date="2003" name="DNA Res.">
        <title>Complete sequence and analysis of the plastid genome of the unicellular red alga Cyanidioschyzon merolae.</title>
        <authorList>
            <person name="Ohta N."/>
            <person name="Matsuzaki M."/>
            <person name="Misumi O."/>
            <person name="Miyagishima S.-Y."/>
            <person name="Nozaki H."/>
            <person name="Tanaka K."/>
            <person name="Shin-i T."/>
            <person name="Kohara Y."/>
            <person name="Kuroiwa T."/>
        </authorList>
    </citation>
    <scope>NUCLEOTIDE SEQUENCE [LARGE SCALE GENOMIC DNA]</scope>
    <scope>DISCUSSION OF SEQUENCE</scope>
    <source>
        <strain>NIES-3377 / 10D</strain>
    </source>
</reference>
<sequence>MCDAIQIRLASPERIRSWAERVLPNGQVVGEVTKPETINYRTLKPEMDGLFCERIFGPVKDWECHCGKYKKVRYKGIVCERCGVEVTESKVRRHRMGYIDLAAVVSHVWYLKGPPSYLALFLNMSSSEVEQVIYFHSYVVLQSTTELVQPKQLLSEDELIILEERLANQPFQVGIGAQAIQYLLQQLDLDMEIRVLRNQLFHAKSSKREKLMKRLRILDNFASTGADPSWMILSVLPVIPPDLRPMVQLDGGRFATSDLNDLYRRVINRNNRLKRLQEILAPEIIIRNEKRMLQEAVDALMDNGRRGRSVVGANNRALKSLSHILEGKQGRFRQNLLGKRVDYSGRSVIVVGPELKLYQCGLPKEMALELFQPFVIQRLMAQGLANNMKAAKKIIQRKEAIVDQILHQVVKAHPVLLNRAPTLHRLGIQAFDPILVDGRAIQLHPLVCAAFNADFDGDQMAVHVPLSVEAQAEARLLMLSVNNFLSPATGDAIIMPSQDMVIGCYYLTANNPASQAKQSHYFADFEHVLMAFEQKQINLHTWVWVHVNNNLNIILERSALQEDWIQTRGESLFLKTTPGRIIFYQQAAYHVGFYNLTINKSHLKELVKTVYNLKGMACATQLADDLKQLGFHYATTCGLSLGIEDLRVAPSKQKIFQWAQQAIEKTEQLWQRAQITHVEKFHKVVDTWSEASETLKQEVVRYYEHTDPLNPVYMMAFSGARGNLSQVRQLVGMRGLMADPHGQLIDLPILSNFREGLTVTEYLISSYGARKGLVDTSLRTADSGYLTRRLVDVAQDVIIRQADCGTLRGIAVPVSKALIGRVLAQDVNEECKRNQLITADMLVALRDTKQVIVRSPLTCEALRCICQLCYGGNLAYGHMVDLAEAVGIIAAQSIGEPGTQLTMRTFHTGGVFTSAQTASVRATLDGVVTYEGRCKSTRTRYGQEAWLLETSTPLFLQNDGQQHRYDFQAGTVLLVKSGQRVKFNTLLAYLPTSTRFEKATKSVDAHNAGEVVFDQLKLEQNLVKKEGILWILSGQMLHLPAGSELLVSNEQQIKPAQVLAQSYLRSRAKGIVQIHTNQVELILDRLSFEVKEPFHFHSGDGQIIAEKFEHQTPTGGQVFHRNGQIWLVPAAIYEVSSQKDLVDIKHGQFILANQRSICGVKNELSGWVQLVKQNEVIKEIRIRPGIYLPKVKTNQLGFVQSHLLLSSYGINAYTRRFCYVENYEQGILISPVYVFAGVSPPKIVAKSRWLSLVMYQTCMFQHQQWVKSYKKVYLMRCQLQLKVAPQAPLNQVTVHKEKNRREWRLSYFSNIKLQAFQTIKWLVKNHQRVEADVPLALIQLVSAFNGIVRYHPMLNRLLVVSDQDVITYSIGKPHHFQIGDVIRIGDQISHGLVAKTSGFVIARDANQIQVRIAQGYFLSRETICYVKDGDLVNEGDHLASLVFEQVKTGDIIQGLPRIEEILEARKPKNSCELAQFDGVIQEQSLVSDDGRVQAIKGTLIVCEGTRVQAGEPLTDGAVNAHEWLQIHFNNAVPYRGMVEAARESFAKLQAKLLHQVQQVYKSQGVDIADKHIEVILRQMTSKVILDDPGDSDFLPGQLVYLNEIASYKHVIFHPVLLGITKAALNTESFISAASFQETTRILAQAAMEGQIDQLRGLKENVIMGRLIPAGTGAKYL</sequence>
<accession>Q85FR6</accession>
<dbReference type="EC" id="2.7.7.6" evidence="1"/>
<dbReference type="EMBL" id="AB002583">
    <property type="protein sequence ID" value="BAC76279.1"/>
    <property type="molecule type" value="Genomic_DNA"/>
</dbReference>
<dbReference type="RefSeq" id="NP_849117.1">
    <property type="nucleotide sequence ID" value="NC_004799.1"/>
</dbReference>
<dbReference type="SMR" id="Q85FR6"/>
<dbReference type="STRING" id="280699.Q85FR6"/>
<dbReference type="EnsemblPlants" id="CMV217CT">
    <property type="protein sequence ID" value="CMV217CT"/>
    <property type="gene ID" value="CMV217C"/>
</dbReference>
<dbReference type="GeneID" id="844996"/>
<dbReference type="Gramene" id="CMV217CT">
    <property type="protein sequence ID" value="CMV217CT"/>
    <property type="gene ID" value="CMV217C"/>
</dbReference>
<dbReference type="KEGG" id="cme:CymeCp185"/>
<dbReference type="eggNOG" id="ENOG502QPYA">
    <property type="taxonomic scope" value="Eukaryota"/>
</dbReference>
<dbReference type="HOGENOM" id="CLU_000524_3_1_1"/>
<dbReference type="Proteomes" id="UP000007014">
    <property type="component" value="Chloroplast"/>
</dbReference>
<dbReference type="GO" id="GO:0009507">
    <property type="term" value="C:chloroplast"/>
    <property type="evidence" value="ECO:0007669"/>
    <property type="project" value="UniProtKB-SubCell"/>
</dbReference>
<dbReference type="GO" id="GO:0000428">
    <property type="term" value="C:DNA-directed RNA polymerase complex"/>
    <property type="evidence" value="ECO:0007669"/>
    <property type="project" value="UniProtKB-KW"/>
</dbReference>
<dbReference type="GO" id="GO:0005739">
    <property type="term" value="C:mitochondrion"/>
    <property type="evidence" value="ECO:0007669"/>
    <property type="project" value="GOC"/>
</dbReference>
<dbReference type="GO" id="GO:0003677">
    <property type="term" value="F:DNA binding"/>
    <property type="evidence" value="ECO:0007669"/>
    <property type="project" value="InterPro"/>
</dbReference>
<dbReference type="GO" id="GO:0003899">
    <property type="term" value="F:DNA-directed RNA polymerase activity"/>
    <property type="evidence" value="ECO:0007669"/>
    <property type="project" value="UniProtKB-EC"/>
</dbReference>
<dbReference type="GO" id="GO:0046872">
    <property type="term" value="F:metal ion binding"/>
    <property type="evidence" value="ECO:0007669"/>
    <property type="project" value="UniProtKB-KW"/>
</dbReference>
<dbReference type="GO" id="GO:0006351">
    <property type="term" value="P:DNA-templated transcription"/>
    <property type="evidence" value="ECO:0007669"/>
    <property type="project" value="InterPro"/>
</dbReference>
<dbReference type="CDD" id="cd02655">
    <property type="entry name" value="RNAP_beta'_C"/>
    <property type="match status" value="1"/>
</dbReference>
<dbReference type="CDD" id="cd01609">
    <property type="entry name" value="RNAP_beta'_N"/>
    <property type="match status" value="1"/>
</dbReference>
<dbReference type="Gene3D" id="1.10.132.30">
    <property type="match status" value="1"/>
</dbReference>
<dbReference type="Gene3D" id="1.10.150.390">
    <property type="match status" value="1"/>
</dbReference>
<dbReference type="Gene3D" id="1.10.1790.20">
    <property type="match status" value="1"/>
</dbReference>
<dbReference type="Gene3D" id="1.10.40.90">
    <property type="match status" value="1"/>
</dbReference>
<dbReference type="Gene3D" id="2.40.40.20">
    <property type="match status" value="1"/>
</dbReference>
<dbReference type="Gene3D" id="2.40.50.100">
    <property type="match status" value="1"/>
</dbReference>
<dbReference type="Gene3D" id="4.10.860.120">
    <property type="entry name" value="RNA polymerase II, clamp domain"/>
    <property type="match status" value="1"/>
</dbReference>
<dbReference type="Gene3D" id="1.10.274.100">
    <property type="entry name" value="RNA polymerase Rpb1, domain 3"/>
    <property type="match status" value="1"/>
</dbReference>
<dbReference type="HAMAP" id="MF_01322">
    <property type="entry name" value="RNApol_bact_RpoC"/>
    <property type="match status" value="1"/>
</dbReference>
<dbReference type="HAMAP" id="MF_01323">
    <property type="entry name" value="RNApol_bact_RpoC1"/>
    <property type="match status" value="1"/>
</dbReference>
<dbReference type="InterPro" id="IPR012755">
    <property type="entry name" value="DNA-dir_RpoC1_gamma"/>
</dbReference>
<dbReference type="InterPro" id="IPR012756">
    <property type="entry name" value="DNA-dir_RpoC2_beta_pp"/>
</dbReference>
<dbReference type="InterPro" id="IPR045867">
    <property type="entry name" value="DNA-dir_RpoC_beta_prime"/>
</dbReference>
<dbReference type="InterPro" id="IPR012754">
    <property type="entry name" value="DNA-dir_RpoC_beta_prime_bact"/>
</dbReference>
<dbReference type="InterPro" id="IPR000722">
    <property type="entry name" value="RNA_pol_asu"/>
</dbReference>
<dbReference type="InterPro" id="IPR006592">
    <property type="entry name" value="RNA_pol_N"/>
</dbReference>
<dbReference type="InterPro" id="IPR007080">
    <property type="entry name" value="RNA_pol_Rpb1_1"/>
</dbReference>
<dbReference type="InterPro" id="IPR007066">
    <property type="entry name" value="RNA_pol_Rpb1_3"/>
</dbReference>
<dbReference type="InterPro" id="IPR042102">
    <property type="entry name" value="RNA_pol_Rpb1_3_sf"/>
</dbReference>
<dbReference type="InterPro" id="IPR007083">
    <property type="entry name" value="RNA_pol_Rpb1_4"/>
</dbReference>
<dbReference type="InterPro" id="IPR007081">
    <property type="entry name" value="RNA_pol_Rpb1_5"/>
</dbReference>
<dbReference type="InterPro" id="IPR044893">
    <property type="entry name" value="RNA_pol_Rpb1_clamp_domain"/>
</dbReference>
<dbReference type="InterPro" id="IPR034678">
    <property type="entry name" value="RNApol_RpoC1"/>
</dbReference>
<dbReference type="InterPro" id="IPR038120">
    <property type="entry name" value="Rpb1_funnel_sf"/>
</dbReference>
<dbReference type="NCBIfam" id="TIGR02387">
    <property type="entry name" value="rpoC1_cyan"/>
    <property type="match status" value="1"/>
</dbReference>
<dbReference type="NCBIfam" id="TIGR02388">
    <property type="entry name" value="rpoC2_cyan"/>
    <property type="match status" value="1"/>
</dbReference>
<dbReference type="NCBIfam" id="TIGR02386">
    <property type="entry name" value="rpoC_TIGR"/>
    <property type="match status" value="1"/>
</dbReference>
<dbReference type="PANTHER" id="PTHR19376">
    <property type="entry name" value="DNA-DIRECTED RNA POLYMERASE"/>
    <property type="match status" value="1"/>
</dbReference>
<dbReference type="PANTHER" id="PTHR19376:SF54">
    <property type="entry name" value="DNA-DIRECTED RNA POLYMERASE SUBUNIT BETA"/>
    <property type="match status" value="1"/>
</dbReference>
<dbReference type="Pfam" id="PF04997">
    <property type="entry name" value="RNA_pol_Rpb1_1"/>
    <property type="match status" value="1"/>
</dbReference>
<dbReference type="Pfam" id="PF00623">
    <property type="entry name" value="RNA_pol_Rpb1_2"/>
    <property type="match status" value="1"/>
</dbReference>
<dbReference type="Pfam" id="PF04983">
    <property type="entry name" value="RNA_pol_Rpb1_3"/>
    <property type="match status" value="1"/>
</dbReference>
<dbReference type="Pfam" id="PF05000">
    <property type="entry name" value="RNA_pol_Rpb1_4"/>
    <property type="match status" value="1"/>
</dbReference>
<dbReference type="Pfam" id="PF04998">
    <property type="entry name" value="RNA_pol_Rpb1_5"/>
    <property type="match status" value="1"/>
</dbReference>
<dbReference type="SMART" id="SM00663">
    <property type="entry name" value="RPOLA_N"/>
    <property type="match status" value="1"/>
</dbReference>
<dbReference type="SUPFAM" id="SSF64484">
    <property type="entry name" value="beta and beta-prime subunits of DNA dependent RNA-polymerase"/>
    <property type="match status" value="1"/>
</dbReference>